<organism>
    <name type="scientific">Xanthomonas campestris pv. campestris (strain 8004)</name>
    <dbReference type="NCBI Taxonomy" id="314565"/>
    <lineage>
        <taxon>Bacteria</taxon>
        <taxon>Pseudomonadati</taxon>
        <taxon>Pseudomonadota</taxon>
        <taxon>Gammaproteobacteria</taxon>
        <taxon>Lysobacterales</taxon>
        <taxon>Lysobacteraceae</taxon>
        <taxon>Xanthomonas</taxon>
    </lineage>
</organism>
<reference key="1">
    <citation type="journal article" date="2005" name="Genome Res.">
        <title>Comparative and functional genomic analyses of the pathogenicity of phytopathogen Xanthomonas campestris pv. campestris.</title>
        <authorList>
            <person name="Qian W."/>
            <person name="Jia Y."/>
            <person name="Ren S.-X."/>
            <person name="He Y.-Q."/>
            <person name="Feng J.-X."/>
            <person name="Lu L.-F."/>
            <person name="Sun Q."/>
            <person name="Ying G."/>
            <person name="Tang D.-J."/>
            <person name="Tang H."/>
            <person name="Wu W."/>
            <person name="Hao P."/>
            <person name="Wang L."/>
            <person name="Jiang B.-L."/>
            <person name="Zeng S."/>
            <person name="Gu W.-Y."/>
            <person name="Lu G."/>
            <person name="Rong L."/>
            <person name="Tian Y."/>
            <person name="Yao Z."/>
            <person name="Fu G."/>
            <person name="Chen B."/>
            <person name="Fang R."/>
            <person name="Qiang B."/>
            <person name="Chen Z."/>
            <person name="Zhao G.-P."/>
            <person name="Tang J.-L."/>
            <person name="He C."/>
        </authorList>
    </citation>
    <scope>NUCLEOTIDE SEQUENCE [LARGE SCALE GENOMIC DNA]</scope>
    <source>
        <strain>8004</strain>
    </source>
</reference>
<feature type="chain" id="PRO_0000206356" description="L-lactate dehydrogenase">
    <location>
        <begin position="1"/>
        <end position="386"/>
    </location>
</feature>
<feature type="domain" description="FMN hydroxy acid dehydrogenase" evidence="1">
    <location>
        <begin position="1"/>
        <end position="380"/>
    </location>
</feature>
<feature type="active site" description="Proton acceptor" evidence="1">
    <location>
        <position position="275"/>
    </location>
</feature>
<feature type="binding site" evidence="1">
    <location>
        <position position="24"/>
    </location>
    <ligand>
        <name>substrate</name>
    </ligand>
</feature>
<feature type="binding site" evidence="1">
    <location>
        <position position="106"/>
    </location>
    <ligand>
        <name>FMN</name>
        <dbReference type="ChEBI" id="CHEBI:58210"/>
    </ligand>
</feature>
<feature type="binding site" evidence="1">
    <location>
        <position position="127"/>
    </location>
    <ligand>
        <name>FMN</name>
        <dbReference type="ChEBI" id="CHEBI:58210"/>
    </ligand>
</feature>
<feature type="binding site" evidence="1">
    <location>
        <position position="129"/>
    </location>
    <ligand>
        <name>substrate</name>
    </ligand>
</feature>
<feature type="binding site" evidence="1">
    <location>
        <position position="155"/>
    </location>
    <ligand>
        <name>FMN</name>
        <dbReference type="ChEBI" id="CHEBI:58210"/>
    </ligand>
</feature>
<feature type="binding site" evidence="1">
    <location>
        <position position="164"/>
    </location>
    <ligand>
        <name>substrate</name>
    </ligand>
</feature>
<feature type="binding site" evidence="1">
    <location>
        <position position="251"/>
    </location>
    <ligand>
        <name>FMN</name>
        <dbReference type="ChEBI" id="CHEBI:58210"/>
    </ligand>
</feature>
<feature type="binding site" evidence="1">
    <location>
        <position position="278"/>
    </location>
    <ligand>
        <name>substrate</name>
    </ligand>
</feature>
<feature type="binding site" evidence="1">
    <location>
        <begin position="306"/>
        <end position="330"/>
    </location>
    <ligand>
        <name>FMN</name>
        <dbReference type="ChEBI" id="CHEBI:58210"/>
    </ligand>
</feature>
<protein>
    <recommendedName>
        <fullName evidence="1">L-lactate dehydrogenase</fullName>
        <ecNumber evidence="1">1.1.-.-</ecNumber>
    </recommendedName>
</protein>
<proteinExistence type="inferred from homology"/>
<accession>Q4V0H2</accession>
<dbReference type="EC" id="1.1.-.-" evidence="1"/>
<dbReference type="EMBL" id="CP000050">
    <property type="protein sequence ID" value="AAY47201.1"/>
    <property type="molecule type" value="Genomic_DNA"/>
</dbReference>
<dbReference type="RefSeq" id="WP_011035364.1">
    <property type="nucleotide sequence ID" value="NZ_CP155948.1"/>
</dbReference>
<dbReference type="SMR" id="Q4V0H2"/>
<dbReference type="KEGG" id="xcb:XC_0110"/>
<dbReference type="HOGENOM" id="CLU_020639_0_0_6"/>
<dbReference type="Proteomes" id="UP000000420">
    <property type="component" value="Chromosome"/>
</dbReference>
<dbReference type="GO" id="GO:0005886">
    <property type="term" value="C:plasma membrane"/>
    <property type="evidence" value="ECO:0007669"/>
    <property type="project" value="UniProtKB-SubCell"/>
</dbReference>
<dbReference type="GO" id="GO:0010181">
    <property type="term" value="F:FMN binding"/>
    <property type="evidence" value="ECO:0007669"/>
    <property type="project" value="InterPro"/>
</dbReference>
<dbReference type="GO" id="GO:0004459">
    <property type="term" value="F:L-lactate dehydrogenase activity"/>
    <property type="evidence" value="ECO:0007669"/>
    <property type="project" value="UniProtKB-UniRule"/>
</dbReference>
<dbReference type="GO" id="GO:0009060">
    <property type="term" value="P:aerobic respiration"/>
    <property type="evidence" value="ECO:0007669"/>
    <property type="project" value="TreeGrafter"/>
</dbReference>
<dbReference type="GO" id="GO:0006089">
    <property type="term" value="P:lactate metabolic process"/>
    <property type="evidence" value="ECO:0007669"/>
    <property type="project" value="UniProtKB-UniRule"/>
</dbReference>
<dbReference type="CDD" id="cd02809">
    <property type="entry name" value="alpha_hydroxyacid_oxid_FMN"/>
    <property type="match status" value="1"/>
</dbReference>
<dbReference type="FunFam" id="3.20.20.70:FF:000029">
    <property type="entry name" value="L-lactate dehydrogenase"/>
    <property type="match status" value="1"/>
</dbReference>
<dbReference type="Gene3D" id="3.20.20.70">
    <property type="entry name" value="Aldolase class I"/>
    <property type="match status" value="1"/>
</dbReference>
<dbReference type="HAMAP" id="MF_01559">
    <property type="entry name" value="L_lact_dehydr"/>
    <property type="match status" value="1"/>
</dbReference>
<dbReference type="InterPro" id="IPR013785">
    <property type="entry name" value="Aldolase_TIM"/>
</dbReference>
<dbReference type="InterPro" id="IPR012133">
    <property type="entry name" value="Alpha-hydoxy_acid_DH_FMN"/>
</dbReference>
<dbReference type="InterPro" id="IPR000262">
    <property type="entry name" value="FMN-dep_DH"/>
</dbReference>
<dbReference type="InterPro" id="IPR037396">
    <property type="entry name" value="FMN_HAD"/>
</dbReference>
<dbReference type="InterPro" id="IPR008259">
    <property type="entry name" value="FMN_hydac_DH_AS"/>
</dbReference>
<dbReference type="InterPro" id="IPR020920">
    <property type="entry name" value="LldD"/>
</dbReference>
<dbReference type="NCBIfam" id="NF033901">
    <property type="entry name" value="L_lactate_LldD"/>
    <property type="match status" value="1"/>
</dbReference>
<dbReference type="NCBIfam" id="NF008398">
    <property type="entry name" value="PRK11197.1"/>
    <property type="match status" value="1"/>
</dbReference>
<dbReference type="PANTHER" id="PTHR10578:SF85">
    <property type="entry name" value="L-LACTATE DEHYDROGENASE"/>
    <property type="match status" value="1"/>
</dbReference>
<dbReference type="PANTHER" id="PTHR10578">
    <property type="entry name" value="S -2-HYDROXY-ACID OXIDASE-RELATED"/>
    <property type="match status" value="1"/>
</dbReference>
<dbReference type="Pfam" id="PF01070">
    <property type="entry name" value="FMN_dh"/>
    <property type="match status" value="1"/>
</dbReference>
<dbReference type="PIRSF" id="PIRSF000138">
    <property type="entry name" value="Al-hdrx_acd_dh"/>
    <property type="match status" value="1"/>
</dbReference>
<dbReference type="SUPFAM" id="SSF51395">
    <property type="entry name" value="FMN-linked oxidoreductases"/>
    <property type="match status" value="1"/>
</dbReference>
<dbReference type="PROSITE" id="PS00557">
    <property type="entry name" value="FMN_HYDROXY_ACID_DH_1"/>
    <property type="match status" value="1"/>
</dbReference>
<dbReference type="PROSITE" id="PS51349">
    <property type="entry name" value="FMN_HYDROXY_ACID_DH_2"/>
    <property type="match status" value="1"/>
</dbReference>
<sequence length="386" mass="41622">MIISAASDYRAAAEARLPPFLFHYIDGGAYAEHTLRRNVSDLADIALRQRVLRNMSDLSLSTELFGETLAMPVALAPVGLTGMYARRGEVQAARAAAARGIPFTLSTVSVCPIEEVAPAIDRPMWFQLYVLKDRGFMRNALERAKTAGVTTLVFTVDMPTPGARYRDAHSGMSGPNASLRRMLQAMTHPRWAWDVGLLGKPHDLGNISTYRGSPTGLQDYIGWLAANFDPSISWKDLEWIREFWTGPMVIKGILDPEDARDAVRFGADGIVVSNHGGRQLDGVLSSARALPAIADAVKGELKILADSGIRSGLDVVRMLALGADAVLLGRAFVYALAAGGQAGVENLLTLIEREMRVAMILTGTHSVAEISGDALSRVTREAAVVP</sequence>
<comment type="function">
    <text evidence="1">Catalyzes the conversion of L-lactate to pyruvate. Is coupled to the respiratory chain.</text>
</comment>
<comment type="catalytic activity">
    <reaction evidence="1">
        <text>(S)-lactate + A = pyruvate + AH2</text>
        <dbReference type="Rhea" id="RHEA:45816"/>
        <dbReference type="ChEBI" id="CHEBI:13193"/>
        <dbReference type="ChEBI" id="CHEBI:15361"/>
        <dbReference type="ChEBI" id="CHEBI:16651"/>
        <dbReference type="ChEBI" id="CHEBI:17499"/>
    </reaction>
</comment>
<comment type="cofactor">
    <cofactor evidence="1">
        <name>FMN</name>
        <dbReference type="ChEBI" id="CHEBI:58210"/>
    </cofactor>
</comment>
<comment type="subcellular location">
    <subcellularLocation>
        <location evidence="1">Cell inner membrane</location>
        <topology evidence="1">Peripheral membrane protein</topology>
    </subcellularLocation>
</comment>
<comment type="similarity">
    <text evidence="1">Belongs to the FMN-dependent alpha-hydroxy acid dehydrogenase family.</text>
</comment>
<evidence type="ECO:0000255" key="1">
    <source>
        <dbReference type="HAMAP-Rule" id="MF_01559"/>
    </source>
</evidence>
<gene>
    <name evidence="1" type="primary">lldD</name>
    <name type="ordered locus">XC_0110</name>
</gene>
<keyword id="KW-0997">Cell inner membrane</keyword>
<keyword id="KW-1003">Cell membrane</keyword>
<keyword id="KW-0285">Flavoprotein</keyword>
<keyword id="KW-0288">FMN</keyword>
<keyword id="KW-0472">Membrane</keyword>
<keyword id="KW-0560">Oxidoreductase</keyword>
<name>LLDD_XANC8</name>